<proteinExistence type="evidence at protein level"/>
<name>SCRN3_MOUSE</name>
<protein>
    <recommendedName>
        <fullName>Secernin-3</fullName>
    </recommendedName>
</protein>
<keyword id="KW-0903">Direct protein sequencing</keyword>
<keyword id="KW-0670">Pyruvate</keyword>
<keyword id="KW-1185">Reference proteome</keyword>
<organism>
    <name type="scientific">Mus musculus</name>
    <name type="common">Mouse</name>
    <dbReference type="NCBI Taxonomy" id="10090"/>
    <lineage>
        <taxon>Eukaryota</taxon>
        <taxon>Metazoa</taxon>
        <taxon>Chordata</taxon>
        <taxon>Craniata</taxon>
        <taxon>Vertebrata</taxon>
        <taxon>Euteleostomi</taxon>
        <taxon>Mammalia</taxon>
        <taxon>Eutheria</taxon>
        <taxon>Euarchontoglires</taxon>
        <taxon>Glires</taxon>
        <taxon>Rodentia</taxon>
        <taxon>Myomorpha</taxon>
        <taxon>Muroidea</taxon>
        <taxon>Muridae</taxon>
        <taxon>Murinae</taxon>
        <taxon>Mus</taxon>
        <taxon>Mus</taxon>
    </lineage>
</organism>
<reference key="1">
    <citation type="journal article" date="2005" name="Science">
        <title>The transcriptional landscape of the mammalian genome.</title>
        <authorList>
            <person name="Carninci P."/>
            <person name="Kasukawa T."/>
            <person name="Katayama S."/>
            <person name="Gough J."/>
            <person name="Frith M.C."/>
            <person name="Maeda N."/>
            <person name="Oyama R."/>
            <person name="Ravasi T."/>
            <person name="Lenhard B."/>
            <person name="Wells C."/>
            <person name="Kodzius R."/>
            <person name="Shimokawa K."/>
            <person name="Bajic V.B."/>
            <person name="Brenner S.E."/>
            <person name="Batalov S."/>
            <person name="Forrest A.R."/>
            <person name="Zavolan M."/>
            <person name="Davis M.J."/>
            <person name="Wilming L.G."/>
            <person name="Aidinis V."/>
            <person name="Allen J.E."/>
            <person name="Ambesi-Impiombato A."/>
            <person name="Apweiler R."/>
            <person name="Aturaliya R.N."/>
            <person name="Bailey T.L."/>
            <person name="Bansal M."/>
            <person name="Baxter L."/>
            <person name="Beisel K.W."/>
            <person name="Bersano T."/>
            <person name="Bono H."/>
            <person name="Chalk A.M."/>
            <person name="Chiu K.P."/>
            <person name="Choudhary V."/>
            <person name="Christoffels A."/>
            <person name="Clutterbuck D.R."/>
            <person name="Crowe M.L."/>
            <person name="Dalla E."/>
            <person name="Dalrymple B.P."/>
            <person name="de Bono B."/>
            <person name="Della Gatta G."/>
            <person name="di Bernardo D."/>
            <person name="Down T."/>
            <person name="Engstrom P."/>
            <person name="Fagiolini M."/>
            <person name="Faulkner G."/>
            <person name="Fletcher C.F."/>
            <person name="Fukushima T."/>
            <person name="Furuno M."/>
            <person name="Futaki S."/>
            <person name="Gariboldi M."/>
            <person name="Georgii-Hemming P."/>
            <person name="Gingeras T.R."/>
            <person name="Gojobori T."/>
            <person name="Green R.E."/>
            <person name="Gustincich S."/>
            <person name="Harbers M."/>
            <person name="Hayashi Y."/>
            <person name="Hensch T.K."/>
            <person name="Hirokawa N."/>
            <person name="Hill D."/>
            <person name="Huminiecki L."/>
            <person name="Iacono M."/>
            <person name="Ikeo K."/>
            <person name="Iwama A."/>
            <person name="Ishikawa T."/>
            <person name="Jakt M."/>
            <person name="Kanapin A."/>
            <person name="Katoh M."/>
            <person name="Kawasawa Y."/>
            <person name="Kelso J."/>
            <person name="Kitamura H."/>
            <person name="Kitano H."/>
            <person name="Kollias G."/>
            <person name="Krishnan S.P."/>
            <person name="Kruger A."/>
            <person name="Kummerfeld S.K."/>
            <person name="Kurochkin I.V."/>
            <person name="Lareau L.F."/>
            <person name="Lazarevic D."/>
            <person name="Lipovich L."/>
            <person name="Liu J."/>
            <person name="Liuni S."/>
            <person name="McWilliam S."/>
            <person name="Madan Babu M."/>
            <person name="Madera M."/>
            <person name="Marchionni L."/>
            <person name="Matsuda H."/>
            <person name="Matsuzawa S."/>
            <person name="Miki H."/>
            <person name="Mignone F."/>
            <person name="Miyake S."/>
            <person name="Morris K."/>
            <person name="Mottagui-Tabar S."/>
            <person name="Mulder N."/>
            <person name="Nakano N."/>
            <person name="Nakauchi H."/>
            <person name="Ng P."/>
            <person name="Nilsson R."/>
            <person name="Nishiguchi S."/>
            <person name="Nishikawa S."/>
            <person name="Nori F."/>
            <person name="Ohara O."/>
            <person name="Okazaki Y."/>
            <person name="Orlando V."/>
            <person name="Pang K.C."/>
            <person name="Pavan W.J."/>
            <person name="Pavesi G."/>
            <person name="Pesole G."/>
            <person name="Petrovsky N."/>
            <person name="Piazza S."/>
            <person name="Reed J."/>
            <person name="Reid J.F."/>
            <person name="Ring B.Z."/>
            <person name="Ringwald M."/>
            <person name="Rost B."/>
            <person name="Ruan Y."/>
            <person name="Salzberg S.L."/>
            <person name="Sandelin A."/>
            <person name="Schneider C."/>
            <person name="Schoenbach C."/>
            <person name="Sekiguchi K."/>
            <person name="Semple C.A."/>
            <person name="Seno S."/>
            <person name="Sessa L."/>
            <person name="Sheng Y."/>
            <person name="Shibata Y."/>
            <person name="Shimada H."/>
            <person name="Shimada K."/>
            <person name="Silva D."/>
            <person name="Sinclair B."/>
            <person name="Sperling S."/>
            <person name="Stupka E."/>
            <person name="Sugiura K."/>
            <person name="Sultana R."/>
            <person name="Takenaka Y."/>
            <person name="Taki K."/>
            <person name="Tammoja K."/>
            <person name="Tan S.L."/>
            <person name="Tang S."/>
            <person name="Taylor M.S."/>
            <person name="Tegner J."/>
            <person name="Teichmann S.A."/>
            <person name="Ueda H.R."/>
            <person name="van Nimwegen E."/>
            <person name="Verardo R."/>
            <person name="Wei C.L."/>
            <person name="Yagi K."/>
            <person name="Yamanishi H."/>
            <person name="Zabarovsky E."/>
            <person name="Zhu S."/>
            <person name="Zimmer A."/>
            <person name="Hide W."/>
            <person name="Bult C."/>
            <person name="Grimmond S.M."/>
            <person name="Teasdale R.D."/>
            <person name="Liu E.T."/>
            <person name="Brusic V."/>
            <person name="Quackenbush J."/>
            <person name="Wahlestedt C."/>
            <person name="Mattick J.S."/>
            <person name="Hume D.A."/>
            <person name="Kai C."/>
            <person name="Sasaki D."/>
            <person name="Tomaru Y."/>
            <person name="Fukuda S."/>
            <person name="Kanamori-Katayama M."/>
            <person name="Suzuki M."/>
            <person name="Aoki J."/>
            <person name="Arakawa T."/>
            <person name="Iida J."/>
            <person name="Imamura K."/>
            <person name="Itoh M."/>
            <person name="Kato T."/>
            <person name="Kawaji H."/>
            <person name="Kawagashira N."/>
            <person name="Kawashima T."/>
            <person name="Kojima M."/>
            <person name="Kondo S."/>
            <person name="Konno H."/>
            <person name="Nakano K."/>
            <person name="Ninomiya N."/>
            <person name="Nishio T."/>
            <person name="Okada M."/>
            <person name="Plessy C."/>
            <person name="Shibata K."/>
            <person name="Shiraki T."/>
            <person name="Suzuki S."/>
            <person name="Tagami M."/>
            <person name="Waki K."/>
            <person name="Watahiki A."/>
            <person name="Okamura-Oho Y."/>
            <person name="Suzuki H."/>
            <person name="Kawai J."/>
            <person name="Hayashizaki Y."/>
        </authorList>
    </citation>
    <scope>NUCLEOTIDE SEQUENCE [LARGE SCALE MRNA]</scope>
    <source>
        <strain>C57BL/6J</strain>
        <tissue>Head</tissue>
        <tissue>Lung</tissue>
    </source>
</reference>
<reference key="2">
    <citation type="journal article" date="2009" name="PLoS Biol.">
        <title>Lineage-specific biology revealed by a finished genome assembly of the mouse.</title>
        <authorList>
            <person name="Church D.M."/>
            <person name="Goodstadt L."/>
            <person name="Hillier L.W."/>
            <person name="Zody M.C."/>
            <person name="Goldstein S."/>
            <person name="She X."/>
            <person name="Bult C.J."/>
            <person name="Agarwala R."/>
            <person name="Cherry J.L."/>
            <person name="DiCuccio M."/>
            <person name="Hlavina W."/>
            <person name="Kapustin Y."/>
            <person name="Meric P."/>
            <person name="Maglott D."/>
            <person name="Birtle Z."/>
            <person name="Marques A.C."/>
            <person name="Graves T."/>
            <person name="Zhou S."/>
            <person name="Teague B."/>
            <person name="Potamousis K."/>
            <person name="Churas C."/>
            <person name="Place M."/>
            <person name="Herschleb J."/>
            <person name="Runnheim R."/>
            <person name="Forrest D."/>
            <person name="Amos-Landgraf J."/>
            <person name="Schwartz D.C."/>
            <person name="Cheng Z."/>
            <person name="Lindblad-Toh K."/>
            <person name="Eichler E.E."/>
            <person name="Ponting C.P."/>
        </authorList>
    </citation>
    <scope>NUCLEOTIDE SEQUENCE [LARGE SCALE GENOMIC DNA]</scope>
    <source>
        <strain>C57BL/6J</strain>
    </source>
</reference>
<reference key="3">
    <citation type="submission" date="2005-07" db="EMBL/GenBank/DDBJ databases">
        <authorList>
            <person name="Mural R.J."/>
            <person name="Adams M.D."/>
            <person name="Myers E.W."/>
            <person name="Smith H.O."/>
            <person name="Venter J.C."/>
        </authorList>
    </citation>
    <scope>NUCLEOTIDE SEQUENCE [LARGE SCALE GENOMIC DNA]</scope>
</reference>
<reference key="4">
    <citation type="journal article" date="2004" name="Genome Res.">
        <title>The status, quality, and expansion of the NIH full-length cDNA project: the Mammalian Gene Collection (MGC).</title>
        <authorList>
            <consortium name="The MGC Project Team"/>
        </authorList>
    </citation>
    <scope>NUCLEOTIDE SEQUENCE [LARGE SCALE MRNA]</scope>
    <source>
        <strain>FVB/N</strain>
        <tissue>Kidney</tissue>
    </source>
</reference>
<reference key="5">
    <citation type="submission" date="2009-01" db="UniProtKB">
        <authorList>
            <person name="Lubec G."/>
            <person name="Sunyer B."/>
            <person name="Chen W.-Q."/>
        </authorList>
    </citation>
    <scope>PROTEIN SEQUENCE OF 30-50; 99-114; 126-136; 148-171; 250-262 AND 397-406</scope>
    <scope>IDENTIFICATION BY MASS SPECTROMETRY</scope>
    <source>
        <strain>OF1</strain>
        <tissue>Hippocampus</tissue>
    </source>
</reference>
<reference key="6">
    <citation type="journal article" date="2010" name="Cell">
        <title>A tissue-specific atlas of mouse protein phosphorylation and expression.</title>
        <authorList>
            <person name="Huttlin E.L."/>
            <person name="Jedrychowski M.P."/>
            <person name="Elias J.E."/>
            <person name="Goswami T."/>
            <person name="Rad R."/>
            <person name="Beausoleil S.A."/>
            <person name="Villen J."/>
            <person name="Haas W."/>
            <person name="Sowa M.E."/>
            <person name="Gygi S.P."/>
        </authorList>
    </citation>
    <scope>IDENTIFICATION BY MASS SPECTROMETRY [LARGE SCALE ANALYSIS]</scope>
    <source>
        <tissue>Brain</tissue>
        <tissue>Brown adipose tissue</tissue>
        <tissue>Heart</tissue>
        <tissue>Kidney</tissue>
        <tissue>Liver</tissue>
        <tissue>Pancreas</tissue>
        <tissue>Spleen</tissue>
        <tissue>Testis</tissue>
    </source>
</reference>
<reference key="7">
    <citation type="journal article" date="2023" name="Mol. Cell. Neurosci.">
        <title>Phenelzine-based probes reveal Secernin-3 is involved in thermal nociception.</title>
        <authorList>
            <person name="Bustin K.A."/>
            <person name="Shishikura K."/>
            <person name="Chen I."/>
            <person name="Lin Z."/>
            <person name="McKnight N."/>
            <person name="Chang Y."/>
            <person name="Wang X."/>
            <person name="Li J.J."/>
            <person name="Arellano E."/>
            <person name="Pei L."/>
            <person name="Morton P.D."/>
            <person name="Gregus A.M."/>
            <person name="Buczynski M.W."/>
            <person name="Matthews M.L."/>
        </authorList>
    </citation>
    <scope>FUNCTION</scope>
    <scope>DISRUPTION PHENOTYPE</scope>
</reference>
<comment type="function">
    <text evidence="3">Plays a role in thermal nociception.</text>
</comment>
<comment type="disruption phenotype">
    <text evidence="3">C57BL/6NJ males exhibit impaired thermal nociceptive sensitivity in a TLR4-dependent inflammatory pain model (PubMed:36924917). No effect is seen in C57BL/6NJ females which is consistent with sex-dependent differences in response to TLR4 activation reported in this strain (PubMed:36924917).</text>
</comment>
<comment type="similarity">
    <text evidence="4">Belongs to the peptidase C69 family. Secernin subfamily.</text>
</comment>
<dbReference type="EMBL" id="AK014701">
    <property type="protein sequence ID" value="BAB29511.3"/>
    <property type="molecule type" value="mRNA"/>
</dbReference>
<dbReference type="EMBL" id="AK165936">
    <property type="protein sequence ID" value="BAE38470.1"/>
    <property type="molecule type" value="mRNA"/>
</dbReference>
<dbReference type="EMBL" id="AL954713">
    <property type="status" value="NOT_ANNOTATED_CDS"/>
    <property type="molecule type" value="Genomic_DNA"/>
</dbReference>
<dbReference type="EMBL" id="CH466519">
    <property type="protein sequence ID" value="EDL27127.1"/>
    <property type="molecule type" value="Genomic_DNA"/>
</dbReference>
<dbReference type="EMBL" id="BC015296">
    <property type="protein sequence ID" value="AAH15296.1"/>
    <property type="molecule type" value="mRNA"/>
</dbReference>
<dbReference type="EMBL" id="BC139390">
    <property type="protein sequence ID" value="AAI39391.1"/>
    <property type="molecule type" value="mRNA"/>
</dbReference>
<dbReference type="EMBL" id="BC139391">
    <property type="protein sequence ID" value="AAI39392.1"/>
    <property type="molecule type" value="mRNA"/>
</dbReference>
<dbReference type="CCDS" id="CCDS16128.1"/>
<dbReference type="RefSeq" id="NP_083298.1">
    <property type="nucleotide sequence ID" value="NM_029022.1"/>
</dbReference>
<dbReference type="RefSeq" id="XP_006500377.1">
    <property type="nucleotide sequence ID" value="XM_006500314.2"/>
</dbReference>
<dbReference type="RefSeq" id="XP_036018539.1">
    <property type="nucleotide sequence ID" value="XM_036162646.1"/>
</dbReference>
<dbReference type="SMR" id="Q3TMH2"/>
<dbReference type="FunCoup" id="Q3TMH2">
    <property type="interactions" value="849"/>
</dbReference>
<dbReference type="STRING" id="10090.ENSMUSP00000088320"/>
<dbReference type="MEROPS" id="C69.005"/>
<dbReference type="GlyGen" id="Q3TMH2">
    <property type="glycosylation" value="3 sites, 1 O-linked glycan (3 sites)"/>
</dbReference>
<dbReference type="iPTMnet" id="Q3TMH2"/>
<dbReference type="PhosphoSitePlus" id="Q3TMH2"/>
<dbReference type="SwissPalm" id="Q3TMH2"/>
<dbReference type="jPOST" id="Q3TMH2"/>
<dbReference type="PaxDb" id="10090-ENSMUSP00000088320"/>
<dbReference type="PeptideAtlas" id="Q3TMH2"/>
<dbReference type="ProteomicsDB" id="255497"/>
<dbReference type="Pumba" id="Q3TMH2"/>
<dbReference type="Antibodypedia" id="47621">
    <property type="antibodies" value="89 antibodies from 25 providers"/>
</dbReference>
<dbReference type="DNASU" id="74616"/>
<dbReference type="Ensembl" id="ENSMUST00000090811.11">
    <property type="protein sequence ID" value="ENSMUSP00000088320.5"/>
    <property type="gene ID" value="ENSMUSG00000008226.15"/>
</dbReference>
<dbReference type="GeneID" id="74616"/>
<dbReference type="KEGG" id="mmu:74616"/>
<dbReference type="UCSC" id="uc008kcm.1">
    <property type="organism name" value="mouse"/>
</dbReference>
<dbReference type="AGR" id="MGI:1921866"/>
<dbReference type="CTD" id="79634"/>
<dbReference type="MGI" id="MGI:1921866">
    <property type="gene designation" value="Scrn3"/>
</dbReference>
<dbReference type="VEuPathDB" id="HostDB:ENSMUSG00000008226"/>
<dbReference type="eggNOG" id="ENOG502QPIA">
    <property type="taxonomic scope" value="Eukaryota"/>
</dbReference>
<dbReference type="GeneTree" id="ENSGT00390000013474"/>
<dbReference type="HOGENOM" id="CLU_046840_0_0_1"/>
<dbReference type="InParanoid" id="Q3TMH2"/>
<dbReference type="OMA" id="CYYDVSD"/>
<dbReference type="OrthoDB" id="5175656at2759"/>
<dbReference type="PhylomeDB" id="Q3TMH2"/>
<dbReference type="TreeFam" id="TF323890"/>
<dbReference type="BioGRID-ORCS" id="74616">
    <property type="hits" value="1 hit in 77 CRISPR screens"/>
</dbReference>
<dbReference type="ChiTaRS" id="Scrn3">
    <property type="organism name" value="mouse"/>
</dbReference>
<dbReference type="PRO" id="PR:Q3TMH2"/>
<dbReference type="Proteomes" id="UP000000589">
    <property type="component" value="Chromosome 2"/>
</dbReference>
<dbReference type="RNAct" id="Q3TMH2">
    <property type="molecule type" value="protein"/>
</dbReference>
<dbReference type="Bgee" id="ENSMUSG00000008226">
    <property type="expression patterns" value="Expressed in muscle of arm and 236 other cell types or tissues"/>
</dbReference>
<dbReference type="ExpressionAtlas" id="Q3TMH2">
    <property type="expression patterns" value="baseline and differential"/>
</dbReference>
<dbReference type="GO" id="GO:0070004">
    <property type="term" value="F:cysteine-type exopeptidase activity"/>
    <property type="evidence" value="ECO:0007669"/>
    <property type="project" value="InterPro"/>
</dbReference>
<dbReference type="GO" id="GO:0016805">
    <property type="term" value="F:dipeptidase activity"/>
    <property type="evidence" value="ECO:0007669"/>
    <property type="project" value="InterPro"/>
</dbReference>
<dbReference type="GO" id="GO:0050965">
    <property type="term" value="P:detection of temperature stimulus involved in sensory perception of pain"/>
    <property type="evidence" value="ECO:0000315"/>
    <property type="project" value="UniProtKB"/>
</dbReference>
<dbReference type="GO" id="GO:0006508">
    <property type="term" value="P:proteolysis"/>
    <property type="evidence" value="ECO:0007669"/>
    <property type="project" value="InterPro"/>
</dbReference>
<dbReference type="FunFam" id="3.60.60.10:FF:000001">
    <property type="entry name" value="Secernin 1"/>
    <property type="match status" value="1"/>
</dbReference>
<dbReference type="Gene3D" id="3.60.60.10">
    <property type="entry name" value="Penicillin V Acylase, Chain A"/>
    <property type="match status" value="1"/>
</dbReference>
<dbReference type="InterPro" id="IPR005322">
    <property type="entry name" value="Peptidase_C69"/>
</dbReference>
<dbReference type="PANTHER" id="PTHR12994">
    <property type="entry name" value="SECERNIN"/>
    <property type="match status" value="1"/>
</dbReference>
<dbReference type="PANTHER" id="PTHR12994:SF18">
    <property type="entry name" value="SECERNIN-3"/>
    <property type="match status" value="1"/>
</dbReference>
<dbReference type="Pfam" id="PF03577">
    <property type="entry name" value="Peptidase_C69"/>
    <property type="match status" value="1"/>
</dbReference>
<feature type="propeptide" id="PRO_0000461895" evidence="1">
    <location>
        <begin position="1"/>
        <end position="5"/>
    </location>
</feature>
<feature type="chain" id="PRO_0000262560" description="Secernin-3">
    <location>
        <begin position="6"/>
        <end position="418"/>
    </location>
</feature>
<feature type="active site" evidence="2">
    <location>
        <position position="6"/>
    </location>
</feature>
<feature type="modified residue" description="Glyoxylic acid (Cys); alternate" evidence="1">
    <location>
        <position position="6"/>
    </location>
</feature>
<feature type="modified residue" description="Pyruvic acid (Cys); alternate" evidence="1">
    <location>
        <position position="6"/>
    </location>
</feature>
<feature type="sequence conflict" description="In Ref. 1; BAB29511." evidence="4" ref="1">
    <original>S</original>
    <variation>P</variation>
    <location>
        <position position="414"/>
    </location>
</feature>
<evidence type="ECO:0000250" key="1">
    <source>
        <dbReference type="UniProtKB" id="Q0VDG4"/>
    </source>
</evidence>
<evidence type="ECO:0000255" key="2"/>
<evidence type="ECO:0000269" key="3">
    <source>
    </source>
</evidence>
<evidence type="ECO:0000305" key="4"/>
<accession>Q3TMH2</accession>
<accession>A2AWR0</accession>
<accession>Q91WF6</accession>
<accession>Q9CUT0</accession>
<sequence>MEPYSCDTFVALPPATVGNRVIFGKNSDRLFDEVQEVIYCPAAVHNDLEKRLKCTYIEVDQVPETYAVVLSRPAWLWGAEMGANEHGVCIGNEAVWGREDISKEEALLGMDLVRLGLERADTAEKALDVIVDLLEKYGQGGNCAEGKEFSYYNSFLIADRNEAWILETSGKYWAAERVQGVRNISNQLSITTKIDREHPDMRNYAKQRGWWDGKEEFDFTAAYSYIDTAAMMTSPSRYCQGYKLLDKHRGNITFETMMEILRDRPSGINMKGEFLTTASMVSVLPQDPSLPCIHLFTATPHPERSVFKPFIFVPHISPLLDTKSPTFEPERPVAKKPYVKPDRRHPLYQKHQEALEMISNSKEKGKTILDKMRKLEKAVSEEIESILQSGHLDEEKTVNLFPQYVKDEIKIYQSNISS</sequence>
<gene>
    <name type="primary">Scrn3</name>
</gene>